<proteinExistence type="inferred from homology"/>
<protein>
    <recommendedName>
        <fullName evidence="1">Integration host factor subunit alpha</fullName>
        <shortName evidence="1">IHF-alpha</shortName>
    </recommendedName>
</protein>
<name>IHFA_BUCAT</name>
<evidence type="ECO:0000255" key="1">
    <source>
        <dbReference type="HAMAP-Rule" id="MF_00380"/>
    </source>
</evidence>
<sequence length="102" mass="11840">MVLTKAAISENLFEKLQLTKKESKEFVEFFFEEVRKSLEKGEAVKLSGFGNFQIKKKKARPGRNPRTGEIFLITARRVVTFKAGQKLKNKINNYLIKKNNNF</sequence>
<keyword id="KW-0233">DNA recombination</keyword>
<keyword id="KW-0238">DNA-binding</keyword>
<keyword id="KW-0804">Transcription</keyword>
<keyword id="KW-0805">Transcription regulation</keyword>
<keyword id="KW-0810">Translation regulation</keyword>
<gene>
    <name evidence="1" type="primary">ihfA</name>
    <name evidence="1" type="synonym">himA</name>
    <name type="ordered locus">BUAPTUC7_130</name>
</gene>
<accession>B8D736</accession>
<feature type="chain" id="PRO_1000190420" description="Integration host factor subunit alpha">
    <location>
        <begin position="1"/>
        <end position="102"/>
    </location>
</feature>
<dbReference type="EMBL" id="CP001158">
    <property type="protein sequence ID" value="ACL29951.1"/>
    <property type="molecule type" value="Genomic_DNA"/>
</dbReference>
<dbReference type="RefSeq" id="WP_009874087.1">
    <property type="nucleotide sequence ID" value="NC_011834.1"/>
</dbReference>
<dbReference type="SMR" id="B8D736"/>
<dbReference type="KEGG" id="bau:BUAPTUC7_130"/>
<dbReference type="HOGENOM" id="CLU_105066_1_3_6"/>
<dbReference type="GO" id="GO:0005829">
    <property type="term" value="C:cytosol"/>
    <property type="evidence" value="ECO:0007669"/>
    <property type="project" value="TreeGrafter"/>
</dbReference>
<dbReference type="GO" id="GO:0003677">
    <property type="term" value="F:DNA binding"/>
    <property type="evidence" value="ECO:0007669"/>
    <property type="project" value="UniProtKB-UniRule"/>
</dbReference>
<dbReference type="GO" id="GO:0030527">
    <property type="term" value="F:structural constituent of chromatin"/>
    <property type="evidence" value="ECO:0007669"/>
    <property type="project" value="InterPro"/>
</dbReference>
<dbReference type="GO" id="GO:0006310">
    <property type="term" value="P:DNA recombination"/>
    <property type="evidence" value="ECO:0007669"/>
    <property type="project" value="UniProtKB-UniRule"/>
</dbReference>
<dbReference type="GO" id="GO:0009893">
    <property type="term" value="P:positive regulation of metabolic process"/>
    <property type="evidence" value="ECO:0007669"/>
    <property type="project" value="UniProtKB-ARBA"/>
</dbReference>
<dbReference type="GO" id="GO:0006355">
    <property type="term" value="P:regulation of DNA-templated transcription"/>
    <property type="evidence" value="ECO:0007669"/>
    <property type="project" value="UniProtKB-UniRule"/>
</dbReference>
<dbReference type="GO" id="GO:0006417">
    <property type="term" value="P:regulation of translation"/>
    <property type="evidence" value="ECO:0007669"/>
    <property type="project" value="UniProtKB-UniRule"/>
</dbReference>
<dbReference type="CDD" id="cd13835">
    <property type="entry name" value="IHF_A"/>
    <property type="match status" value="1"/>
</dbReference>
<dbReference type="Gene3D" id="4.10.520.10">
    <property type="entry name" value="IHF-like DNA-binding proteins"/>
    <property type="match status" value="1"/>
</dbReference>
<dbReference type="HAMAP" id="MF_00380">
    <property type="entry name" value="IHF_alpha"/>
    <property type="match status" value="1"/>
</dbReference>
<dbReference type="InterPro" id="IPR000119">
    <property type="entry name" value="Hist_DNA-bd"/>
</dbReference>
<dbReference type="InterPro" id="IPR020816">
    <property type="entry name" value="Histone-like_DNA-bd_CS"/>
</dbReference>
<dbReference type="InterPro" id="IPR010992">
    <property type="entry name" value="IHF-like_DNA-bd_dom_sf"/>
</dbReference>
<dbReference type="InterPro" id="IPR005684">
    <property type="entry name" value="IHF_alpha"/>
</dbReference>
<dbReference type="NCBIfam" id="TIGR00987">
    <property type="entry name" value="himA"/>
    <property type="match status" value="1"/>
</dbReference>
<dbReference type="NCBIfam" id="NF001401">
    <property type="entry name" value="PRK00285.1"/>
    <property type="match status" value="1"/>
</dbReference>
<dbReference type="PANTHER" id="PTHR33175">
    <property type="entry name" value="DNA-BINDING PROTEIN HU"/>
    <property type="match status" value="1"/>
</dbReference>
<dbReference type="PANTHER" id="PTHR33175:SF2">
    <property type="entry name" value="INTEGRATION HOST FACTOR SUBUNIT ALPHA"/>
    <property type="match status" value="1"/>
</dbReference>
<dbReference type="Pfam" id="PF00216">
    <property type="entry name" value="Bac_DNA_binding"/>
    <property type="match status" value="1"/>
</dbReference>
<dbReference type="PRINTS" id="PR01727">
    <property type="entry name" value="DNABINDINGHU"/>
</dbReference>
<dbReference type="SMART" id="SM00411">
    <property type="entry name" value="BHL"/>
    <property type="match status" value="1"/>
</dbReference>
<dbReference type="SUPFAM" id="SSF47729">
    <property type="entry name" value="IHF-like DNA-binding proteins"/>
    <property type="match status" value="1"/>
</dbReference>
<dbReference type="PROSITE" id="PS00045">
    <property type="entry name" value="HISTONE_LIKE"/>
    <property type="match status" value="1"/>
</dbReference>
<reference key="1">
    <citation type="journal article" date="2009" name="Science">
        <title>The dynamics and time scale of ongoing genomic erosion in symbiotic bacteria.</title>
        <authorList>
            <person name="Moran N.A."/>
            <person name="McLaughlin H.J."/>
            <person name="Sorek R."/>
        </authorList>
    </citation>
    <scope>NUCLEOTIDE SEQUENCE [LARGE SCALE GENOMIC DNA]</scope>
    <source>
        <strain>Tuc7</strain>
    </source>
</reference>
<organism>
    <name type="scientific">Buchnera aphidicola subsp. Acyrthosiphon pisum (strain Tuc7)</name>
    <dbReference type="NCBI Taxonomy" id="561501"/>
    <lineage>
        <taxon>Bacteria</taxon>
        <taxon>Pseudomonadati</taxon>
        <taxon>Pseudomonadota</taxon>
        <taxon>Gammaproteobacteria</taxon>
        <taxon>Enterobacterales</taxon>
        <taxon>Erwiniaceae</taxon>
        <taxon>Buchnera</taxon>
    </lineage>
</organism>
<comment type="function">
    <text evidence="1">This protein is one of the two subunits of integration host factor, a specific DNA-binding protein that functions in genetic recombination as well as in transcriptional and translational control.</text>
</comment>
<comment type="subunit">
    <text evidence="1">Heterodimer of an alpha and a beta chain.</text>
</comment>
<comment type="similarity">
    <text evidence="1">Belongs to the bacterial histone-like protein family.</text>
</comment>